<comment type="function">
    <text evidence="1">One of two assembly initiator proteins, it binds directly to the 5'-end of the 23S rRNA, where it nucleates assembly of the 50S subunit.</text>
</comment>
<comment type="function">
    <text evidence="1">One of the proteins that surrounds the polypeptide exit tunnel on the outside of the subunit.</text>
</comment>
<comment type="subunit">
    <text evidence="1">Part of the 50S ribosomal subunit.</text>
</comment>
<comment type="similarity">
    <text evidence="1">Belongs to the universal ribosomal protein uL24 family.</text>
</comment>
<evidence type="ECO:0000255" key="1">
    <source>
        <dbReference type="HAMAP-Rule" id="MF_01326"/>
    </source>
</evidence>
<evidence type="ECO:0000305" key="2"/>
<dbReference type="EMBL" id="CP000923">
    <property type="protein sequence ID" value="ABY92180.1"/>
    <property type="molecule type" value="Genomic_DNA"/>
</dbReference>
<dbReference type="RefSeq" id="WP_003868571.1">
    <property type="nucleotide sequence ID" value="NC_010320.1"/>
</dbReference>
<dbReference type="SMR" id="B0K5Q4"/>
<dbReference type="KEGG" id="tex:Teth514_0878"/>
<dbReference type="HOGENOM" id="CLU_093315_2_3_9"/>
<dbReference type="Proteomes" id="UP000002155">
    <property type="component" value="Chromosome"/>
</dbReference>
<dbReference type="GO" id="GO:1990904">
    <property type="term" value="C:ribonucleoprotein complex"/>
    <property type="evidence" value="ECO:0007669"/>
    <property type="project" value="UniProtKB-KW"/>
</dbReference>
<dbReference type="GO" id="GO:0005840">
    <property type="term" value="C:ribosome"/>
    <property type="evidence" value="ECO:0007669"/>
    <property type="project" value="UniProtKB-KW"/>
</dbReference>
<dbReference type="GO" id="GO:0019843">
    <property type="term" value="F:rRNA binding"/>
    <property type="evidence" value="ECO:0007669"/>
    <property type="project" value="UniProtKB-UniRule"/>
</dbReference>
<dbReference type="GO" id="GO:0003735">
    <property type="term" value="F:structural constituent of ribosome"/>
    <property type="evidence" value="ECO:0007669"/>
    <property type="project" value="InterPro"/>
</dbReference>
<dbReference type="GO" id="GO:0006412">
    <property type="term" value="P:translation"/>
    <property type="evidence" value="ECO:0007669"/>
    <property type="project" value="UniProtKB-UniRule"/>
</dbReference>
<dbReference type="CDD" id="cd06089">
    <property type="entry name" value="KOW_RPL26"/>
    <property type="match status" value="1"/>
</dbReference>
<dbReference type="FunFam" id="2.30.30.30:FF:000004">
    <property type="entry name" value="50S ribosomal protein L24"/>
    <property type="match status" value="1"/>
</dbReference>
<dbReference type="Gene3D" id="2.30.30.30">
    <property type="match status" value="1"/>
</dbReference>
<dbReference type="HAMAP" id="MF_01326_B">
    <property type="entry name" value="Ribosomal_uL24_B"/>
    <property type="match status" value="1"/>
</dbReference>
<dbReference type="InterPro" id="IPR005824">
    <property type="entry name" value="KOW"/>
</dbReference>
<dbReference type="InterPro" id="IPR014722">
    <property type="entry name" value="Rib_uL2_dom2"/>
</dbReference>
<dbReference type="InterPro" id="IPR003256">
    <property type="entry name" value="Ribosomal_uL24"/>
</dbReference>
<dbReference type="InterPro" id="IPR005825">
    <property type="entry name" value="Ribosomal_uL24_CS"/>
</dbReference>
<dbReference type="InterPro" id="IPR041988">
    <property type="entry name" value="Ribosomal_uL24_KOW"/>
</dbReference>
<dbReference type="InterPro" id="IPR008991">
    <property type="entry name" value="Translation_prot_SH3-like_sf"/>
</dbReference>
<dbReference type="NCBIfam" id="TIGR01079">
    <property type="entry name" value="rplX_bact"/>
    <property type="match status" value="1"/>
</dbReference>
<dbReference type="PANTHER" id="PTHR12903">
    <property type="entry name" value="MITOCHONDRIAL RIBOSOMAL PROTEIN L24"/>
    <property type="match status" value="1"/>
</dbReference>
<dbReference type="Pfam" id="PF00467">
    <property type="entry name" value="KOW"/>
    <property type="match status" value="1"/>
</dbReference>
<dbReference type="Pfam" id="PF17136">
    <property type="entry name" value="ribosomal_L24"/>
    <property type="match status" value="1"/>
</dbReference>
<dbReference type="SMART" id="SM00739">
    <property type="entry name" value="KOW"/>
    <property type="match status" value="1"/>
</dbReference>
<dbReference type="SUPFAM" id="SSF50104">
    <property type="entry name" value="Translation proteins SH3-like domain"/>
    <property type="match status" value="1"/>
</dbReference>
<dbReference type="PROSITE" id="PS01108">
    <property type="entry name" value="RIBOSOMAL_L24"/>
    <property type="match status" value="1"/>
</dbReference>
<proteinExistence type="inferred from homology"/>
<feature type="chain" id="PRO_0000355725" description="Large ribosomal subunit protein uL24">
    <location>
        <begin position="1"/>
        <end position="107"/>
    </location>
</feature>
<reference key="1">
    <citation type="submission" date="2008-01" db="EMBL/GenBank/DDBJ databases">
        <title>Complete sequence of Thermoanaerobacter sp. X514.</title>
        <authorList>
            <consortium name="US DOE Joint Genome Institute"/>
            <person name="Copeland A."/>
            <person name="Lucas S."/>
            <person name="Lapidus A."/>
            <person name="Barry K."/>
            <person name="Glavina del Rio T."/>
            <person name="Dalin E."/>
            <person name="Tice H."/>
            <person name="Pitluck S."/>
            <person name="Bruce D."/>
            <person name="Goodwin L."/>
            <person name="Saunders E."/>
            <person name="Brettin T."/>
            <person name="Detter J.C."/>
            <person name="Han C."/>
            <person name="Schmutz J."/>
            <person name="Larimer F."/>
            <person name="Land M."/>
            <person name="Hauser L."/>
            <person name="Kyrpides N."/>
            <person name="Kim E."/>
            <person name="Hemme C."/>
            <person name="Fields M.W."/>
            <person name="He Z."/>
            <person name="Zhou J."/>
            <person name="Richardson P."/>
        </authorList>
    </citation>
    <scope>NUCLEOTIDE SEQUENCE [LARGE SCALE GENOMIC DNA]</scope>
    <source>
        <strain>X514</strain>
    </source>
</reference>
<accession>B0K5Q4</accession>
<sequence>MAQNKLHVKKGDMVVVISGKDKGKKGKVLQAFPKEGKVIVEGVNIVTKHRKATSPQKPGGIIHQEAPIYSSKVMLYCENCGRGVRYGVKVLENGEKIRYCKRCNETL</sequence>
<organism>
    <name type="scientific">Thermoanaerobacter sp. (strain X514)</name>
    <dbReference type="NCBI Taxonomy" id="399726"/>
    <lineage>
        <taxon>Bacteria</taxon>
        <taxon>Bacillati</taxon>
        <taxon>Bacillota</taxon>
        <taxon>Clostridia</taxon>
        <taxon>Thermoanaerobacterales</taxon>
        <taxon>Thermoanaerobacteraceae</taxon>
        <taxon>Thermoanaerobacter</taxon>
    </lineage>
</organism>
<protein>
    <recommendedName>
        <fullName evidence="1">Large ribosomal subunit protein uL24</fullName>
    </recommendedName>
    <alternativeName>
        <fullName evidence="2">50S ribosomal protein L24</fullName>
    </alternativeName>
</protein>
<keyword id="KW-0687">Ribonucleoprotein</keyword>
<keyword id="KW-0689">Ribosomal protein</keyword>
<keyword id="KW-0694">RNA-binding</keyword>
<keyword id="KW-0699">rRNA-binding</keyword>
<gene>
    <name evidence="1" type="primary">rplX</name>
    <name type="ordered locus">Teth514_0878</name>
</gene>
<name>RL24_THEPX</name>